<gene>
    <name evidence="1" type="primary">leuA</name>
    <name type="ordered locus">SeAg_B0129</name>
</gene>
<sequence length="523" mass="57431">MSQQVIIFDTTLRDGEQALQASLSAKEKLQIALALERMGVDVMEVGFPVSSPGDFESVQTIARTIKNSRVCALARCVEKDIDVAAQALKVADAFRIHTFIATSPMHIATKLRSTLDEVIERAVYMVKRARNYTDDVEFSCEDAGRTPVDDLARVVEAAINAGARTINIPDTVGYTMPFEFAGIISGLYERVPNIDKAIISVHTHDDLGIAVGNSLAAVHAGARQVEGAMNGIGERAGNCALEEVIMAIKVRKDIMNVHTNINHHEIWRTSQTVSQICNMPIPANKAIVGSGAFAHSSGIHQDGVLKNRENYEIMTPESIGLNQIQLNLTSRSGRAAVKHRMEEMGYKDTDYNMDHLYDAFLKLADKKGQVFDYDLEALAFINKQQEEPEHFRLDYFSVQSGSSDIATASVKLACGEEIKAEAANGNGPVDAIYQAINRLTGYDVELVKYDLNAKGQGKDALGQVDIVVNHHGRRFHGVGLATDIVESSAKAMVHVLNNIWRAAEVEKELQRKAQNKENNKETV</sequence>
<comment type="function">
    <text evidence="1">Catalyzes the condensation of the acetyl group of acetyl-CoA with 3-methyl-2-oxobutanoate (2-ketoisovalerate) to form 3-carboxy-3-hydroxy-4-methylpentanoate (2-isopropylmalate).</text>
</comment>
<comment type="catalytic activity">
    <reaction evidence="1">
        <text>3-methyl-2-oxobutanoate + acetyl-CoA + H2O = (2S)-2-isopropylmalate + CoA + H(+)</text>
        <dbReference type="Rhea" id="RHEA:21524"/>
        <dbReference type="ChEBI" id="CHEBI:1178"/>
        <dbReference type="ChEBI" id="CHEBI:11851"/>
        <dbReference type="ChEBI" id="CHEBI:15377"/>
        <dbReference type="ChEBI" id="CHEBI:15378"/>
        <dbReference type="ChEBI" id="CHEBI:57287"/>
        <dbReference type="ChEBI" id="CHEBI:57288"/>
        <dbReference type="EC" id="2.3.3.13"/>
    </reaction>
</comment>
<comment type="cofactor">
    <cofactor evidence="1">
        <name>Mn(2+)</name>
        <dbReference type="ChEBI" id="CHEBI:29035"/>
    </cofactor>
</comment>
<comment type="pathway">
    <text evidence="1">Amino-acid biosynthesis; L-leucine biosynthesis; L-leucine from 3-methyl-2-oxobutanoate: step 1/4.</text>
</comment>
<comment type="subunit">
    <text evidence="1">Homodimer.</text>
</comment>
<comment type="subcellular location">
    <subcellularLocation>
        <location evidence="1">Cytoplasm</location>
    </subcellularLocation>
</comment>
<comment type="similarity">
    <text evidence="1">Belongs to the alpha-IPM synthase/homocitrate synthase family. LeuA type 1 subfamily.</text>
</comment>
<name>LEU1_SALA4</name>
<reference key="1">
    <citation type="journal article" date="2011" name="J. Bacteriol.">
        <title>Comparative genomics of 28 Salmonella enterica isolates: evidence for CRISPR-mediated adaptive sublineage evolution.</title>
        <authorList>
            <person name="Fricke W.F."/>
            <person name="Mammel M.K."/>
            <person name="McDermott P.F."/>
            <person name="Tartera C."/>
            <person name="White D.G."/>
            <person name="Leclerc J.E."/>
            <person name="Ravel J."/>
            <person name="Cebula T.A."/>
        </authorList>
    </citation>
    <scope>NUCLEOTIDE SEQUENCE [LARGE SCALE GENOMIC DNA]</scope>
    <source>
        <strain>SL483</strain>
    </source>
</reference>
<accession>B5F7U9</accession>
<evidence type="ECO:0000255" key="1">
    <source>
        <dbReference type="HAMAP-Rule" id="MF_01025"/>
    </source>
</evidence>
<protein>
    <recommendedName>
        <fullName evidence="1">2-isopropylmalate synthase</fullName>
        <ecNumber evidence="1">2.3.3.13</ecNumber>
    </recommendedName>
    <alternativeName>
        <fullName evidence="1">Alpha-IPM synthase</fullName>
    </alternativeName>
    <alternativeName>
        <fullName evidence="1">Alpha-isopropylmalate synthase</fullName>
    </alternativeName>
</protein>
<keyword id="KW-0028">Amino-acid biosynthesis</keyword>
<keyword id="KW-0100">Branched-chain amino acid biosynthesis</keyword>
<keyword id="KW-0963">Cytoplasm</keyword>
<keyword id="KW-0432">Leucine biosynthesis</keyword>
<keyword id="KW-0464">Manganese</keyword>
<keyword id="KW-0479">Metal-binding</keyword>
<keyword id="KW-0808">Transferase</keyword>
<feature type="chain" id="PRO_1000149263" description="2-isopropylmalate synthase">
    <location>
        <begin position="1"/>
        <end position="523"/>
    </location>
</feature>
<feature type="domain" description="Pyruvate carboxyltransferase" evidence="1">
    <location>
        <begin position="5"/>
        <end position="267"/>
    </location>
</feature>
<feature type="region of interest" description="Regulatory domain" evidence="1">
    <location>
        <begin position="392"/>
        <end position="523"/>
    </location>
</feature>
<feature type="binding site" evidence="1">
    <location>
        <position position="14"/>
    </location>
    <ligand>
        <name>Mn(2+)</name>
        <dbReference type="ChEBI" id="CHEBI:29035"/>
    </ligand>
</feature>
<feature type="binding site" evidence="1">
    <location>
        <position position="202"/>
    </location>
    <ligand>
        <name>Mn(2+)</name>
        <dbReference type="ChEBI" id="CHEBI:29035"/>
    </ligand>
</feature>
<feature type="binding site" evidence="1">
    <location>
        <position position="204"/>
    </location>
    <ligand>
        <name>Mn(2+)</name>
        <dbReference type="ChEBI" id="CHEBI:29035"/>
    </ligand>
</feature>
<feature type="binding site" evidence="1">
    <location>
        <position position="238"/>
    </location>
    <ligand>
        <name>Mn(2+)</name>
        <dbReference type="ChEBI" id="CHEBI:29035"/>
    </ligand>
</feature>
<proteinExistence type="inferred from homology"/>
<dbReference type="EC" id="2.3.3.13" evidence="1"/>
<dbReference type="EMBL" id="CP001138">
    <property type="protein sequence ID" value="ACH49674.1"/>
    <property type="molecule type" value="Genomic_DNA"/>
</dbReference>
<dbReference type="RefSeq" id="WP_000082820.1">
    <property type="nucleotide sequence ID" value="NC_011149.1"/>
</dbReference>
<dbReference type="SMR" id="B5F7U9"/>
<dbReference type="KEGG" id="sea:SeAg_B0129"/>
<dbReference type="HOGENOM" id="CLU_022158_0_1_6"/>
<dbReference type="UniPathway" id="UPA00048">
    <property type="reaction ID" value="UER00070"/>
</dbReference>
<dbReference type="Proteomes" id="UP000008819">
    <property type="component" value="Chromosome"/>
</dbReference>
<dbReference type="GO" id="GO:0005829">
    <property type="term" value="C:cytosol"/>
    <property type="evidence" value="ECO:0007669"/>
    <property type="project" value="TreeGrafter"/>
</dbReference>
<dbReference type="GO" id="GO:0003852">
    <property type="term" value="F:2-isopropylmalate synthase activity"/>
    <property type="evidence" value="ECO:0007669"/>
    <property type="project" value="UniProtKB-UniRule"/>
</dbReference>
<dbReference type="GO" id="GO:0003985">
    <property type="term" value="F:acetyl-CoA C-acetyltransferase activity"/>
    <property type="evidence" value="ECO:0007669"/>
    <property type="project" value="UniProtKB-UniRule"/>
</dbReference>
<dbReference type="GO" id="GO:0030145">
    <property type="term" value="F:manganese ion binding"/>
    <property type="evidence" value="ECO:0007669"/>
    <property type="project" value="UniProtKB-UniRule"/>
</dbReference>
<dbReference type="GO" id="GO:0009098">
    <property type="term" value="P:L-leucine biosynthetic process"/>
    <property type="evidence" value="ECO:0007669"/>
    <property type="project" value="UniProtKB-UniRule"/>
</dbReference>
<dbReference type="CDD" id="cd07940">
    <property type="entry name" value="DRE_TIM_IPMS"/>
    <property type="match status" value="1"/>
</dbReference>
<dbReference type="FunFam" id="1.10.238.260:FF:000001">
    <property type="entry name" value="2-isopropylmalate synthase"/>
    <property type="match status" value="1"/>
</dbReference>
<dbReference type="FunFam" id="3.20.20.70:FF:000010">
    <property type="entry name" value="2-isopropylmalate synthase"/>
    <property type="match status" value="1"/>
</dbReference>
<dbReference type="FunFam" id="3.30.160.270:FF:000001">
    <property type="entry name" value="2-isopropylmalate synthase"/>
    <property type="match status" value="1"/>
</dbReference>
<dbReference type="Gene3D" id="1.10.238.260">
    <property type="match status" value="1"/>
</dbReference>
<dbReference type="Gene3D" id="3.30.160.270">
    <property type="match status" value="1"/>
</dbReference>
<dbReference type="Gene3D" id="3.20.20.70">
    <property type="entry name" value="Aldolase class I"/>
    <property type="match status" value="1"/>
</dbReference>
<dbReference type="HAMAP" id="MF_01025">
    <property type="entry name" value="LeuA_type1"/>
    <property type="match status" value="1"/>
</dbReference>
<dbReference type="InterPro" id="IPR050073">
    <property type="entry name" value="2-IPM_HCS-like"/>
</dbReference>
<dbReference type="InterPro" id="IPR013709">
    <property type="entry name" value="2-isopropylmalate_synth_dimer"/>
</dbReference>
<dbReference type="InterPro" id="IPR002034">
    <property type="entry name" value="AIPM/Hcit_synth_CS"/>
</dbReference>
<dbReference type="InterPro" id="IPR013785">
    <property type="entry name" value="Aldolase_TIM"/>
</dbReference>
<dbReference type="InterPro" id="IPR054691">
    <property type="entry name" value="LeuA/HCS_post-cat"/>
</dbReference>
<dbReference type="InterPro" id="IPR036230">
    <property type="entry name" value="LeuA_allosteric_dom_sf"/>
</dbReference>
<dbReference type="InterPro" id="IPR005671">
    <property type="entry name" value="LeuA_bact_synth"/>
</dbReference>
<dbReference type="InterPro" id="IPR000891">
    <property type="entry name" value="PYR_CT"/>
</dbReference>
<dbReference type="NCBIfam" id="TIGR00973">
    <property type="entry name" value="leuA_bact"/>
    <property type="match status" value="1"/>
</dbReference>
<dbReference type="NCBIfam" id="NF002084">
    <property type="entry name" value="PRK00915.1-1"/>
    <property type="match status" value="1"/>
</dbReference>
<dbReference type="NCBIfam" id="NF002086">
    <property type="entry name" value="PRK00915.1-3"/>
    <property type="match status" value="1"/>
</dbReference>
<dbReference type="PANTHER" id="PTHR10277:SF9">
    <property type="entry name" value="2-ISOPROPYLMALATE SYNTHASE 1, CHLOROPLASTIC-RELATED"/>
    <property type="match status" value="1"/>
</dbReference>
<dbReference type="PANTHER" id="PTHR10277">
    <property type="entry name" value="HOMOCITRATE SYNTHASE-RELATED"/>
    <property type="match status" value="1"/>
</dbReference>
<dbReference type="Pfam" id="PF22617">
    <property type="entry name" value="HCS_D2"/>
    <property type="match status" value="1"/>
</dbReference>
<dbReference type="Pfam" id="PF00682">
    <property type="entry name" value="HMGL-like"/>
    <property type="match status" value="1"/>
</dbReference>
<dbReference type="Pfam" id="PF08502">
    <property type="entry name" value="LeuA_dimer"/>
    <property type="match status" value="1"/>
</dbReference>
<dbReference type="SMART" id="SM00917">
    <property type="entry name" value="LeuA_dimer"/>
    <property type="match status" value="1"/>
</dbReference>
<dbReference type="SUPFAM" id="SSF110921">
    <property type="entry name" value="2-isopropylmalate synthase LeuA, allosteric (dimerisation) domain"/>
    <property type="match status" value="1"/>
</dbReference>
<dbReference type="SUPFAM" id="SSF51569">
    <property type="entry name" value="Aldolase"/>
    <property type="match status" value="1"/>
</dbReference>
<dbReference type="PROSITE" id="PS00815">
    <property type="entry name" value="AIPM_HOMOCIT_SYNTH_1"/>
    <property type="match status" value="1"/>
</dbReference>
<dbReference type="PROSITE" id="PS00816">
    <property type="entry name" value="AIPM_HOMOCIT_SYNTH_2"/>
    <property type="match status" value="1"/>
</dbReference>
<dbReference type="PROSITE" id="PS50991">
    <property type="entry name" value="PYR_CT"/>
    <property type="match status" value="1"/>
</dbReference>
<organism>
    <name type="scientific">Salmonella agona (strain SL483)</name>
    <dbReference type="NCBI Taxonomy" id="454166"/>
    <lineage>
        <taxon>Bacteria</taxon>
        <taxon>Pseudomonadati</taxon>
        <taxon>Pseudomonadota</taxon>
        <taxon>Gammaproteobacteria</taxon>
        <taxon>Enterobacterales</taxon>
        <taxon>Enterobacteriaceae</taxon>
        <taxon>Salmonella</taxon>
    </lineage>
</organism>